<comment type="function">
    <text evidence="1">Catalyzes the interconversion of beta-pyran and beta-furan forms of D-ribose.</text>
</comment>
<comment type="catalytic activity">
    <reaction evidence="1">
        <text>beta-D-ribopyranose = beta-D-ribofuranose</text>
        <dbReference type="Rhea" id="RHEA:25432"/>
        <dbReference type="ChEBI" id="CHEBI:27476"/>
        <dbReference type="ChEBI" id="CHEBI:47002"/>
        <dbReference type="EC" id="5.4.99.62"/>
    </reaction>
</comment>
<comment type="pathway">
    <text evidence="1">Carbohydrate metabolism; D-ribose degradation; D-ribose 5-phosphate from beta-D-ribopyranose: step 1/2.</text>
</comment>
<comment type="subunit">
    <text evidence="1">Homodecamer.</text>
</comment>
<comment type="subcellular location">
    <subcellularLocation>
        <location evidence="1">Cytoplasm</location>
    </subcellularLocation>
</comment>
<comment type="similarity">
    <text evidence="1">Belongs to the RbsD / FucU family. RbsD subfamily.</text>
</comment>
<comment type="sequence caution" evidence="2">
    <conflict type="erroneous initiation">
        <sequence resource="EMBL-CDS" id="ACB19088"/>
    </conflict>
</comment>
<proteinExistence type="inferred from homology"/>
<name>RBSD_ECOSM</name>
<protein>
    <recommendedName>
        <fullName evidence="1">D-ribose pyranase</fullName>
        <ecNumber evidence="1">5.4.99.62</ecNumber>
    </recommendedName>
</protein>
<dbReference type="EC" id="5.4.99.62" evidence="1"/>
<dbReference type="EMBL" id="CP000970">
    <property type="protein sequence ID" value="ACB19088.1"/>
    <property type="status" value="ALT_INIT"/>
    <property type="molecule type" value="Genomic_DNA"/>
</dbReference>
<dbReference type="RefSeq" id="WP_000715936.1">
    <property type="nucleotide sequence ID" value="NC_010498.1"/>
</dbReference>
<dbReference type="SMR" id="B1LL75"/>
<dbReference type="GeneID" id="93778201"/>
<dbReference type="KEGG" id="ecm:EcSMS35_4116"/>
<dbReference type="HOGENOM" id="CLU_135498_0_0_6"/>
<dbReference type="UniPathway" id="UPA00916">
    <property type="reaction ID" value="UER00888"/>
</dbReference>
<dbReference type="Proteomes" id="UP000007011">
    <property type="component" value="Chromosome"/>
</dbReference>
<dbReference type="GO" id="GO:0005829">
    <property type="term" value="C:cytosol"/>
    <property type="evidence" value="ECO:0007669"/>
    <property type="project" value="TreeGrafter"/>
</dbReference>
<dbReference type="GO" id="GO:0062193">
    <property type="term" value="F:D-ribose pyranase activity"/>
    <property type="evidence" value="ECO:0007669"/>
    <property type="project" value="UniProtKB-EC"/>
</dbReference>
<dbReference type="GO" id="GO:0016872">
    <property type="term" value="F:intramolecular lyase activity"/>
    <property type="evidence" value="ECO:0007669"/>
    <property type="project" value="UniProtKB-UniRule"/>
</dbReference>
<dbReference type="GO" id="GO:0048029">
    <property type="term" value="F:monosaccharide binding"/>
    <property type="evidence" value="ECO:0007669"/>
    <property type="project" value="InterPro"/>
</dbReference>
<dbReference type="GO" id="GO:0019303">
    <property type="term" value="P:D-ribose catabolic process"/>
    <property type="evidence" value="ECO:0007669"/>
    <property type="project" value="UniProtKB-UniRule"/>
</dbReference>
<dbReference type="FunFam" id="3.40.1650.10:FF:000002">
    <property type="entry name" value="D-ribose pyranase"/>
    <property type="match status" value="1"/>
</dbReference>
<dbReference type="Gene3D" id="3.40.1650.10">
    <property type="entry name" value="RbsD-like domain"/>
    <property type="match status" value="1"/>
</dbReference>
<dbReference type="HAMAP" id="MF_01661">
    <property type="entry name" value="D_rib_pyranase"/>
    <property type="match status" value="1"/>
</dbReference>
<dbReference type="InterPro" id="IPR023064">
    <property type="entry name" value="D-ribose_pyranase"/>
</dbReference>
<dbReference type="InterPro" id="IPR023750">
    <property type="entry name" value="RbsD-like_sf"/>
</dbReference>
<dbReference type="InterPro" id="IPR007721">
    <property type="entry name" value="RbsD_FucU"/>
</dbReference>
<dbReference type="NCBIfam" id="NF008761">
    <property type="entry name" value="PRK11797.1"/>
    <property type="match status" value="1"/>
</dbReference>
<dbReference type="PANTHER" id="PTHR37831">
    <property type="entry name" value="D-RIBOSE PYRANASE"/>
    <property type="match status" value="1"/>
</dbReference>
<dbReference type="PANTHER" id="PTHR37831:SF1">
    <property type="entry name" value="D-RIBOSE PYRANASE"/>
    <property type="match status" value="1"/>
</dbReference>
<dbReference type="Pfam" id="PF05025">
    <property type="entry name" value="RbsD_FucU"/>
    <property type="match status" value="1"/>
</dbReference>
<dbReference type="SUPFAM" id="SSF102546">
    <property type="entry name" value="RbsD-like"/>
    <property type="match status" value="1"/>
</dbReference>
<accession>B1LL75</accession>
<gene>
    <name evidence="1" type="primary">rbsD</name>
    <name type="ordered locus">EcSMS35_4116</name>
</gene>
<sequence length="139" mass="15283">MKKGTVLNSDISSVISRLGHTDTLVVCDAGLPIPKSTTRIDMALTQGVPSFMQVLGVVTNEMQVEAAIIAEEIKQHNPQLHETLLTHLEQLQKHQGNTIEIRYTTHEQFKQQTAESQAVIRSGECSPYANIILCAGVTF</sequence>
<reference key="1">
    <citation type="journal article" date="2008" name="J. Bacteriol.">
        <title>Insights into the environmental resistance gene pool from the genome sequence of the multidrug-resistant environmental isolate Escherichia coli SMS-3-5.</title>
        <authorList>
            <person name="Fricke W.F."/>
            <person name="Wright M.S."/>
            <person name="Lindell A.H."/>
            <person name="Harkins D.M."/>
            <person name="Baker-Austin C."/>
            <person name="Ravel J."/>
            <person name="Stepanauskas R."/>
        </authorList>
    </citation>
    <scope>NUCLEOTIDE SEQUENCE [LARGE SCALE GENOMIC DNA]</scope>
    <source>
        <strain>SMS-3-5 / SECEC</strain>
    </source>
</reference>
<evidence type="ECO:0000255" key="1">
    <source>
        <dbReference type="HAMAP-Rule" id="MF_01661"/>
    </source>
</evidence>
<evidence type="ECO:0000305" key="2"/>
<organism>
    <name type="scientific">Escherichia coli (strain SMS-3-5 / SECEC)</name>
    <dbReference type="NCBI Taxonomy" id="439855"/>
    <lineage>
        <taxon>Bacteria</taxon>
        <taxon>Pseudomonadati</taxon>
        <taxon>Pseudomonadota</taxon>
        <taxon>Gammaproteobacteria</taxon>
        <taxon>Enterobacterales</taxon>
        <taxon>Enterobacteriaceae</taxon>
        <taxon>Escherichia</taxon>
    </lineage>
</organism>
<keyword id="KW-0119">Carbohydrate metabolism</keyword>
<keyword id="KW-0963">Cytoplasm</keyword>
<keyword id="KW-0413">Isomerase</keyword>
<feature type="chain" id="PRO_0000346198" description="D-ribose pyranase">
    <location>
        <begin position="1"/>
        <end position="139"/>
    </location>
</feature>
<feature type="active site" description="Proton donor" evidence="1">
    <location>
        <position position="20"/>
    </location>
</feature>
<feature type="binding site" evidence="1">
    <location>
        <position position="28"/>
    </location>
    <ligand>
        <name>substrate</name>
    </ligand>
</feature>
<feature type="binding site" evidence="1">
    <location>
        <position position="106"/>
    </location>
    <ligand>
        <name>substrate</name>
    </ligand>
</feature>
<feature type="binding site" evidence="1">
    <location>
        <begin position="128"/>
        <end position="130"/>
    </location>
    <ligand>
        <name>substrate</name>
    </ligand>
</feature>